<keyword id="KW-0067">ATP-binding</keyword>
<keyword id="KW-0903">Direct protein sequencing</keyword>
<keyword id="KW-0436">Ligase</keyword>
<keyword id="KW-0547">Nucleotide-binding</keyword>
<keyword id="KW-1185">Reference proteome</keyword>
<keyword id="KW-0677">Repeat</keyword>
<keyword id="KW-0833">Ubl conjugation pathway</keyword>
<feature type="chain" id="PRO_0000194963" description="Ubiquitin-activating enzyme E1 1">
    <location>
        <begin position="1"/>
        <end position="1051"/>
    </location>
</feature>
<feature type="repeat" description="1-1">
    <location>
        <begin position="56"/>
        <end position="194"/>
    </location>
</feature>
<feature type="repeat" description="1-2">
    <location>
        <begin position="453"/>
        <end position="605"/>
    </location>
</feature>
<feature type="region of interest" description="2 approximate repeats">
    <location>
        <begin position="56"/>
        <end position="605"/>
    </location>
</feature>
<feature type="active site" description="Glycyl thioester intermediate" evidence="2 3">
    <location>
        <position position="626"/>
    </location>
</feature>
<feature type="binding site" evidence="1">
    <location>
        <position position="472"/>
    </location>
    <ligand>
        <name>ATP</name>
        <dbReference type="ChEBI" id="CHEBI:30616"/>
    </ligand>
</feature>
<feature type="binding site" evidence="1">
    <location>
        <position position="498"/>
    </location>
    <ligand>
        <name>ATP</name>
        <dbReference type="ChEBI" id="CHEBI:30616"/>
    </ligand>
</feature>
<feature type="binding site" evidence="1">
    <location>
        <position position="509"/>
    </location>
    <ligand>
        <name>ATP</name>
        <dbReference type="ChEBI" id="CHEBI:30616"/>
    </ligand>
</feature>
<feature type="binding site" evidence="1">
    <location>
        <position position="522"/>
    </location>
    <ligand>
        <name>ATP</name>
        <dbReference type="ChEBI" id="CHEBI:30616"/>
    </ligand>
</feature>
<feature type="binding site" evidence="1">
    <location>
        <begin position="570"/>
        <end position="571"/>
    </location>
    <ligand>
        <name>ATP</name>
        <dbReference type="ChEBI" id="CHEBI:30616"/>
    </ligand>
</feature>
<feature type="mutagenesis site" description="Abolishes enzyme activity." evidence="3">
    <original>C</original>
    <variation>A</variation>
    <location>
        <position position="626"/>
    </location>
</feature>
<organism>
    <name type="scientific">Triticum aestivum</name>
    <name type="common">Wheat</name>
    <dbReference type="NCBI Taxonomy" id="4565"/>
    <lineage>
        <taxon>Eukaryota</taxon>
        <taxon>Viridiplantae</taxon>
        <taxon>Streptophyta</taxon>
        <taxon>Embryophyta</taxon>
        <taxon>Tracheophyta</taxon>
        <taxon>Spermatophyta</taxon>
        <taxon>Magnoliopsida</taxon>
        <taxon>Liliopsida</taxon>
        <taxon>Poales</taxon>
        <taxon>Poaceae</taxon>
        <taxon>BOP clade</taxon>
        <taxon>Pooideae</taxon>
        <taxon>Triticodae</taxon>
        <taxon>Triticeae</taxon>
        <taxon>Triticinae</taxon>
        <taxon>Triticum</taxon>
    </lineage>
</organism>
<evidence type="ECO:0000250" key="1">
    <source>
        <dbReference type="UniProtKB" id="P22515"/>
    </source>
</evidence>
<evidence type="ECO:0000255" key="2">
    <source>
        <dbReference type="PROSITE-ProRule" id="PRU10132"/>
    </source>
</evidence>
<evidence type="ECO:0000269" key="3">
    <source>
    </source>
</evidence>
<evidence type="ECO:0000303" key="4">
    <source>
    </source>
</evidence>
<evidence type="ECO:0000305" key="5"/>
<sequence length="1051" mass="117008">MLPRKREIVAGEVEDLQKKTRAGEGEVTREEGDAAMAGRGNEIDEDLHSRQLAVYGRETMKRLFGSNVLVSGLQGLGAEIAKNLVLAGVKSVTLHDDGNVELWDLSSNFFLSENDVGQNRAQACVQKLQELNNAVLVSALTGDLTKEHLSKFQAVVFTDISLDKAIEFDDYCHSQQPPIAFIKSEVRGLFGSVFCDFGPEFTVLDVDGEEPHTGIVASISNDNPALVSCVDDERLEFQDGDLVVFSEVHGMTELNDGKPRKVKNARPYSFFLEEDTSSFGAYVRGGIVTQVKPPKVIKFKPLKEAMSEPGEFLMSDFSKFERPPLLHLAFQALDKFRTELSRFPVAGSTDDVQRVIEYAISINDTLGDRKLEEIDKKLLHHFASGSRAVLNPMAAMFGGIVGQEVVKACSGKFHPLYQFFYFDSVESLPVDPLEPGDLKPKNSRYDAQISVFGSKLQNKLEEAKIFMVGSGALGCEFLKNLALMGISCSQNGNLTLTDDDVIEKSNLSRQFLFRDWNIGQPKSTVAATAAMVINPKLHVEALQNRASPETENVFNDAFWENLDAVVNALDNVTARMYIDSRCVYFQKPLLESGTLGAKCNTQMVIPHLTENYGASRDPPEKQAPMCTVHSFPHNIDHCLTWARSEFEGLLEKTPTEVNAFLSNPTTYISAARTAGDAQARDQLERVIECLDRDKCETFQDSITWARLKFEDYFSNRVKQLTFTFPEDSMTSSGAPFWSAPKRFPRPVEFSSSDQSQLSFILAAAILRAETFGIPIPEWAKTPNKLAAEAVDKVIVPDFQPKQGVKIVTHEKATSLSSASVDDAAVIEELIAKLEEVSKTLPSGFHMNPIQFEKDDDTNFHMDVIAGFANMRARNYSIPEVDKLKAKFIAGRIIPAIATSTAMATGLVCLELYKALAGGHKVEDYRNTFANLAIPLFSIAEPVPPKTIKHQELSWTVWDRWTVTGNITLRELLEWLKEKGLNAYSISCGTSLLYNSMFPRHKERLDRKVVDVAREVAKMEVPSYRRHLDVVVACEDDDDNDVDIPLVSVYFR</sequence>
<protein>
    <recommendedName>
        <fullName>Ubiquitin-activating enzyme E1 1</fullName>
        <ecNumber evidence="3">6.2.1.45</ecNumber>
    </recommendedName>
</protein>
<name>UBE11_WHEAT</name>
<accession>P20973</accession>
<dbReference type="EC" id="6.2.1.45" evidence="3"/>
<dbReference type="EMBL" id="M55604">
    <property type="protein sequence ID" value="AAA34308.1"/>
    <property type="molecule type" value="mRNA"/>
</dbReference>
<dbReference type="SMR" id="P20973"/>
<dbReference type="STRING" id="4565.P20973"/>
<dbReference type="PaxDb" id="4565-Traes_5BL_87CFD581E.1"/>
<dbReference type="eggNOG" id="KOG2012">
    <property type="taxonomic scope" value="Eukaryota"/>
</dbReference>
<dbReference type="BioCyc" id="MetaCyc:MONOMER-16752"/>
<dbReference type="UniPathway" id="UPA00143"/>
<dbReference type="Proteomes" id="UP000019116">
    <property type="component" value="Unplaced"/>
</dbReference>
<dbReference type="ExpressionAtlas" id="P20973">
    <property type="expression patterns" value="baseline and differential"/>
</dbReference>
<dbReference type="GO" id="GO:0005737">
    <property type="term" value="C:cytoplasm"/>
    <property type="evidence" value="ECO:0000318"/>
    <property type="project" value="GO_Central"/>
</dbReference>
<dbReference type="GO" id="GO:0005634">
    <property type="term" value="C:nucleus"/>
    <property type="evidence" value="ECO:0000318"/>
    <property type="project" value="GO_Central"/>
</dbReference>
<dbReference type="GO" id="GO:0005524">
    <property type="term" value="F:ATP binding"/>
    <property type="evidence" value="ECO:0007669"/>
    <property type="project" value="UniProtKB-KW"/>
</dbReference>
<dbReference type="GO" id="GO:0004839">
    <property type="term" value="F:ubiquitin activating enzyme activity"/>
    <property type="evidence" value="ECO:0000318"/>
    <property type="project" value="GO_Central"/>
</dbReference>
<dbReference type="GO" id="GO:0006974">
    <property type="term" value="P:DNA damage response"/>
    <property type="evidence" value="ECO:0000318"/>
    <property type="project" value="GO_Central"/>
</dbReference>
<dbReference type="GO" id="GO:0016567">
    <property type="term" value="P:protein ubiquitination"/>
    <property type="evidence" value="ECO:0000318"/>
    <property type="project" value="GO_Central"/>
</dbReference>
<dbReference type="GO" id="GO:0006511">
    <property type="term" value="P:ubiquitin-dependent protein catabolic process"/>
    <property type="evidence" value="ECO:0000318"/>
    <property type="project" value="GO_Central"/>
</dbReference>
<dbReference type="CDD" id="cd01491">
    <property type="entry name" value="Ube1_repeat1"/>
    <property type="match status" value="1"/>
</dbReference>
<dbReference type="CDD" id="cd01490">
    <property type="entry name" value="Ube1_repeat2"/>
    <property type="match status" value="1"/>
</dbReference>
<dbReference type="FunFam" id="3.40.50.12550:FF:000001">
    <property type="entry name" value="Ubiquitin-activating enzyme E1 1"/>
    <property type="match status" value="1"/>
</dbReference>
<dbReference type="FunFam" id="3.40.50.720:FF:000015">
    <property type="entry name" value="Ubiquitin-activating enzyme E1 1"/>
    <property type="match status" value="1"/>
</dbReference>
<dbReference type="FunFam" id="1.10.10.2660:FF:000002">
    <property type="entry name" value="Ubiquitin-activating enzyme E1 2"/>
    <property type="match status" value="1"/>
</dbReference>
<dbReference type="FunFam" id="3.10.290.60:FF:000001">
    <property type="entry name" value="Ubiquitin-activating enzyme E1 2"/>
    <property type="match status" value="1"/>
</dbReference>
<dbReference type="FunFam" id="3.50.50.80:FF:000003">
    <property type="entry name" value="Ubiquitin-activating enzyme E1 2"/>
    <property type="match status" value="1"/>
</dbReference>
<dbReference type="FunFam" id="2.40.30.180:FF:000001">
    <property type="entry name" value="ubiquitin-like modifier-activating enzyme 1"/>
    <property type="match status" value="1"/>
</dbReference>
<dbReference type="Gene3D" id="3.40.50.720">
    <property type="entry name" value="NAD(P)-binding Rossmann-like Domain"/>
    <property type="match status" value="1"/>
</dbReference>
<dbReference type="Gene3D" id="2.40.30.180">
    <property type="entry name" value="Ubiquitin-activating enzyme E1, FCCH domain"/>
    <property type="match status" value="1"/>
</dbReference>
<dbReference type="Gene3D" id="3.50.50.80">
    <property type="entry name" value="Ubiquitin-activating enzyme E1, inactive adenylation domain, subdomain 1"/>
    <property type="match status" value="1"/>
</dbReference>
<dbReference type="Gene3D" id="3.40.50.12550">
    <property type="entry name" value="Ubiquitin-activating enzyme E1, inactive adenylation domain, subdomain 2"/>
    <property type="match status" value="1"/>
</dbReference>
<dbReference type="Gene3D" id="1.10.10.2660">
    <property type="entry name" value="Ubiquitin-activating enzyme E1, SCCH domain"/>
    <property type="match status" value="1"/>
</dbReference>
<dbReference type="Gene3D" id="3.10.290.60">
    <property type="entry name" value="Ubiquitin-activating enzyme E1, UFD domain"/>
    <property type="match status" value="1"/>
</dbReference>
<dbReference type="InterPro" id="IPR032420">
    <property type="entry name" value="E1_4HB"/>
</dbReference>
<dbReference type="InterPro" id="IPR032418">
    <property type="entry name" value="E1_FCCH"/>
</dbReference>
<dbReference type="InterPro" id="IPR042302">
    <property type="entry name" value="E1_FCCH_sf"/>
</dbReference>
<dbReference type="InterPro" id="IPR045886">
    <property type="entry name" value="ThiF/MoeB/HesA"/>
</dbReference>
<dbReference type="InterPro" id="IPR000594">
    <property type="entry name" value="ThiF_NAD_FAD-bd"/>
</dbReference>
<dbReference type="InterPro" id="IPR018965">
    <property type="entry name" value="Ub-activating_enz_E1_C"/>
</dbReference>
<dbReference type="InterPro" id="IPR042449">
    <property type="entry name" value="Ub-E1_IAD_1"/>
</dbReference>
<dbReference type="InterPro" id="IPR038252">
    <property type="entry name" value="UBA_E1_C_sf"/>
</dbReference>
<dbReference type="InterPro" id="IPR019572">
    <property type="entry name" value="UBA_E1_SCCH"/>
</dbReference>
<dbReference type="InterPro" id="IPR042063">
    <property type="entry name" value="Ubi_acti_E1_SCCH"/>
</dbReference>
<dbReference type="InterPro" id="IPR035985">
    <property type="entry name" value="Ubiquitin-activating_enz"/>
</dbReference>
<dbReference type="InterPro" id="IPR018075">
    <property type="entry name" value="UBQ-activ_enz_E1"/>
</dbReference>
<dbReference type="InterPro" id="IPR018074">
    <property type="entry name" value="UBQ-activ_enz_E1_CS"/>
</dbReference>
<dbReference type="InterPro" id="IPR033127">
    <property type="entry name" value="UBQ-activ_enz_E1_Cys_AS"/>
</dbReference>
<dbReference type="InterPro" id="IPR000011">
    <property type="entry name" value="UBQ/SUMO-activ_enz_E1-like"/>
</dbReference>
<dbReference type="NCBIfam" id="TIGR01408">
    <property type="entry name" value="Ube1"/>
    <property type="match status" value="1"/>
</dbReference>
<dbReference type="PANTHER" id="PTHR10953:SF162">
    <property type="entry name" value="SUMO-ACTIVATING ENZYME SUBUNIT 1"/>
    <property type="match status" value="1"/>
</dbReference>
<dbReference type="PANTHER" id="PTHR10953">
    <property type="entry name" value="UBIQUITIN-ACTIVATING ENZYME E1"/>
    <property type="match status" value="1"/>
</dbReference>
<dbReference type="Pfam" id="PF16191">
    <property type="entry name" value="E1_4HB"/>
    <property type="match status" value="1"/>
</dbReference>
<dbReference type="Pfam" id="PF16190">
    <property type="entry name" value="E1_FCCH"/>
    <property type="match status" value="1"/>
</dbReference>
<dbReference type="Pfam" id="PF09358">
    <property type="entry name" value="E1_UFD"/>
    <property type="match status" value="1"/>
</dbReference>
<dbReference type="Pfam" id="PF00899">
    <property type="entry name" value="ThiF"/>
    <property type="match status" value="2"/>
</dbReference>
<dbReference type="Pfam" id="PF10585">
    <property type="entry name" value="UBA_E1_SCCH"/>
    <property type="match status" value="1"/>
</dbReference>
<dbReference type="PRINTS" id="PR01849">
    <property type="entry name" value="UBIQUITINACT"/>
</dbReference>
<dbReference type="SMART" id="SM00985">
    <property type="entry name" value="UBA_e1_C"/>
    <property type="match status" value="1"/>
</dbReference>
<dbReference type="SUPFAM" id="SSF69572">
    <property type="entry name" value="Activating enzymes of the ubiquitin-like proteins"/>
    <property type="match status" value="2"/>
</dbReference>
<dbReference type="PROSITE" id="PS00536">
    <property type="entry name" value="UBIQUITIN_ACTIVAT_1"/>
    <property type="match status" value="1"/>
</dbReference>
<dbReference type="PROSITE" id="PS00865">
    <property type="entry name" value="UBIQUITIN_ACTIVAT_2"/>
    <property type="match status" value="1"/>
</dbReference>
<comment type="function">
    <text evidence="3">Activates ubiquitin by first adenylating its C-terminal glycine residue with ATP, and thereafter linking this residue to the side chain of a cysteine residue in E1, yielding a ubiquitin-E1 thioester and free AMP.</text>
</comment>
<comment type="catalytic activity">
    <reaction evidence="3">
        <text>ATP + ubiquitin + [E1 ubiquitin-activating enzyme]-L-cysteine = AMP + diphosphate + S-ubiquitinyl-[E1 ubiquitin-activating enzyme]-L-cysteine.</text>
        <dbReference type="EC" id="6.2.1.45"/>
    </reaction>
</comment>
<comment type="pathway">
    <text evidence="3">Protein modification; protein ubiquitination.</text>
</comment>
<comment type="subunit">
    <text>Monomer.</text>
</comment>
<comment type="PTM">
    <text>The N-terminus is blocked.</text>
</comment>
<comment type="miscellaneous">
    <text evidence="5">There are two active sites within the E1 molecule, allowing it to accommodate two ubiquitin moieties at a time, with a new ubiquitin forming an adenylate intermediate as the previous one is transferred to the thiol site.</text>
</comment>
<comment type="miscellaneous">
    <text>There are multiple genes encoding E1 in wheat.</text>
</comment>
<comment type="similarity">
    <text evidence="5">Belongs to the ubiquitin-activating E1 family.</text>
</comment>
<proteinExistence type="evidence at protein level"/>
<reference key="1">
    <citation type="journal article" date="1990" name="J. Biol. Chem.">
        <title>Cloning of ubiquitin activating enzyme from wheat and expression of a functional protein in Escherichia coli.</title>
        <authorList>
            <person name="Hatfield P.M."/>
            <person name="Callis J."/>
            <person name="Vierstra R.D."/>
        </authorList>
    </citation>
    <scope>NUCLEOTIDE SEQUENCE [MRNA]</scope>
    <scope>PARTIAL PROTEIN SEQUENCE</scope>
    <source>
        <strain>cv. Augusta</strain>
    </source>
</reference>
<reference key="2">
    <citation type="journal article" date="1992" name="J. Biol. Chem.">
        <title>Multiple forms of ubiquitin-activating enzyme E1 from wheat. Identification of an essential cysteine by in vitro mutagenesis.</title>
        <authorList>
            <person name="Hatfield P.M."/>
            <person name="Vierstra R.D."/>
        </authorList>
    </citation>
    <scope>FUNCTION</scope>
    <scope>CATALYTIC ACTIVITY</scope>
    <scope>PATHWAY</scope>
    <scope>MUTAGENESIS OF CYSTEINE RESIDUES</scope>
    <scope>ACTIVE SITE</scope>
</reference>
<gene>
    <name evidence="4" type="primary">UBA1</name>
</gene>